<organism>
    <name type="scientific">Saccharomyces cerevisiae (strain ATCC 204508 / S288c)</name>
    <name type="common">Baker's yeast</name>
    <dbReference type="NCBI Taxonomy" id="559292"/>
    <lineage>
        <taxon>Eukaryota</taxon>
        <taxon>Fungi</taxon>
        <taxon>Dikarya</taxon>
        <taxon>Ascomycota</taxon>
        <taxon>Saccharomycotina</taxon>
        <taxon>Saccharomycetes</taxon>
        <taxon>Saccharomycetales</taxon>
        <taxon>Saccharomycetaceae</taxon>
        <taxon>Saccharomyces</taxon>
    </lineage>
</organism>
<protein>
    <recommendedName>
        <fullName>Intron-encoded RNA maturase bI4</fullName>
    </recommendedName>
    <alternativeName>
        <fullName>RNA maturase SCbI4</fullName>
    </alternativeName>
    <component>
        <recommendedName>
            <fullName>Truncated, nonfunctional cytochrome b</fullName>
        </recommendedName>
    </component>
    <component>
        <recommendedName>
            <fullName>RNA maturase bI4</fullName>
            <ecNumber>3.1.-.-</ecNumber>
        </recommendedName>
    </component>
</protein>
<feature type="chain" id="PRO_0000014020" description="Truncated, nonfunctional cytochrome b">
    <location>
        <begin position="1"/>
        <end status="unknown"/>
    </location>
</feature>
<feature type="chain" id="PRO_0000014021" description="RNA maturase bI4">
    <location>
        <begin status="unknown"/>
        <end position="638"/>
    </location>
</feature>
<feature type="region of interest" description="COB exons 1 to 4 encoded">
    <location>
        <begin position="1"/>
        <end position="253"/>
    </location>
</feature>
<feature type="region of interest" description="COB intron 4 encoded">
    <location>
        <begin position="253"/>
        <end position="638"/>
    </location>
</feature>
<feature type="sequence conflict" description="In Ref. 1; CAB43023." evidence="5" ref="1">
    <original>K</original>
    <variation>E</variation>
    <location>
        <position position="370"/>
    </location>
</feature>
<feature type="sequence conflict" description="In Ref. 4; AAB21125." evidence="5" ref="4">
    <original>T</original>
    <variation>L</variation>
    <location>
        <position position="390"/>
    </location>
</feature>
<feature type="sequence conflict" description="In Ref. 4; AAB21125." evidence="5" ref="4">
    <original>E</original>
    <variation>K</variation>
    <location>
        <position position="433"/>
    </location>
</feature>
<feature type="sequence conflict" description="In Ref. 1; CAB43023." evidence="5" ref="1">
    <original>A</original>
    <variation>T</variation>
    <location>
        <position position="459"/>
    </location>
</feature>
<feature type="sequence conflict" description="In Ref. 4; AAB21125." evidence="5" ref="4">
    <original>Q</original>
    <variation>K</variation>
    <location>
        <position position="465"/>
    </location>
</feature>
<feature type="sequence conflict" description="In Ref. 4; AAB21125." evidence="5" ref="4">
    <original>T</original>
    <variation>L</variation>
    <location>
        <position position="586"/>
    </location>
</feature>
<comment type="function">
    <text evidence="1 2 3 4">Mitochondrial mRNA maturase required for splicing of intron 4 of the cytochrome b (COB) gene, containing its own coding sequence, and intron 4 in COX1, coding for the related homing endonuclease aI4. In vivo splicing requires in addition the imported mitochondrial leucyl-tRNA synthetase NAM2. Both proteins seem to stimulate the intrinsic ribozyme activity of intron bI4 through binding to and stabilizing specific secondary and tertiary structure elements in the RNA.</text>
</comment>
<comment type="subunit">
    <text>Forms a ternary complex with intron derived RNA and the imported mitochondrial leucyl-tRNA synthetase NAM2. The proteins do not interact directly with each other.</text>
</comment>
<comment type="subcellular location">
    <subcellularLocation>
        <location>Mitochondrion</location>
    </subcellularLocation>
</comment>
<comment type="PTM">
    <text evidence="4">The mature protein may arise from proteolytic cleavage of an in-frame translation of COB exons 1 to 4 plus intron 4, containing the bI4 open reading frame. Cleavage would take place close to the Met-385 resulting in an active maturase of about 30 kDa.</text>
</comment>
<comment type="miscellaneous">
    <text>Residues 385 to 638 are sufficient for maturase activity.</text>
</comment>
<comment type="similarity">
    <text evidence="5">In the C-terminal section; belongs to the LAGLIDADG endonuclease family.</text>
</comment>
<comment type="sequence caution" evidence="5">
    <conflict type="erroneous gene model prediction">
        <sequence resource="EMBL-CDS" id="CAA24073"/>
    </conflict>
    <text>COB was not predicted to be expressed alternatively as a fusion with intron 4.</text>
</comment>
<comment type="sequence caution" evidence="5">
    <conflict type="erroneous gene model prediction">
        <sequence resource="EMBL-CDS" id="CAB43023"/>
    </conflict>
    <text>COB was not predicted to be expressed alternatively as a fusion with intron 4.</text>
</comment>
<accession>P03879</accession>
<accession>A0A0A7NYH9</accession>
<accession>Q02324</accession>
<accession>Q9ZZW6</accession>
<reference key="1">
    <citation type="journal article" date="1980" name="J. Biol. Chem.">
        <title>Assembly of the mitochondrial membrane system. DNA sequence and organization of the cytochrome b gene in Saccharomyces cerevisiae D273-10B.</title>
        <authorList>
            <person name="Nobrega F.G."/>
            <person name="Tzagoloff A."/>
        </authorList>
    </citation>
    <scope>NUCLEOTIDE SEQUENCE [GENOMIC DNA]</scope>
    <source>
        <strain>ATCC 24657 / D273-10B</strain>
    </source>
</reference>
<reference key="2">
    <citation type="journal article" date="1998" name="FEBS Lett.">
        <title>The complete sequence of the mitochondrial genome of Saccharomyces cerevisiae.</title>
        <authorList>
            <person name="Foury F."/>
            <person name="Roganti T."/>
            <person name="Lecrenier N."/>
            <person name="Purnelle B."/>
        </authorList>
    </citation>
    <scope>NUCLEOTIDE SEQUENCE [LARGE SCALE GENOMIC DNA]</scope>
    <source>
        <strain>ATCC 96604 / S288c / FY1679</strain>
    </source>
</reference>
<reference key="3">
    <citation type="journal article" date="2014" name="G3 (Bethesda)">
        <title>The reference genome sequence of Saccharomyces cerevisiae: Then and now.</title>
        <authorList>
            <person name="Engel S.R."/>
            <person name="Dietrich F.S."/>
            <person name="Fisk D.G."/>
            <person name="Binkley G."/>
            <person name="Balakrishnan R."/>
            <person name="Costanzo M.C."/>
            <person name="Dwight S.S."/>
            <person name="Hitz B.C."/>
            <person name="Karra K."/>
            <person name="Nash R.S."/>
            <person name="Weng S."/>
            <person name="Wong E.D."/>
            <person name="Lloyd P."/>
            <person name="Skrzypek M.S."/>
            <person name="Miyasato S.R."/>
            <person name="Simison M."/>
            <person name="Cherry J.M."/>
        </authorList>
    </citation>
    <scope>GENOME REANNOTATION</scope>
    <source>
        <strain>ATCC 96604 / S288c / FY1679</strain>
    </source>
</reference>
<reference key="4">
    <citation type="journal article" date="1992" name="Mol. Cell. Biol.">
        <title>Connections between RNA splicing and DNA intron mobility in yeast mitochondria: RNA maturase and DNA endonuclease switching experiments.</title>
        <authorList>
            <person name="Goguel V."/>
            <person name="Delahodde A."/>
            <person name="Jacq C."/>
        </authorList>
    </citation>
    <scope>NUCLEOTIDE SEQUENCE [GENOMIC DNA] OF 385-638</scope>
    <source>
        <strain>ATCC 201238 / W303-1B</strain>
    </source>
</reference>
<reference key="5">
    <citation type="journal article" date="1988" name="EMBO J.">
        <title>The NAM2 proteins from S. cerevisiae and S. douglasii are mitochondrial leucyl-tRNA synthetases, and are involved in mRNA splicing.</title>
        <authorList>
            <person name="Herbert C.J."/>
            <person name="Labouesse M."/>
            <person name="Dujardin G."/>
            <person name="Slonimski P.P."/>
        </authorList>
    </citation>
    <scope>FUNCTION</scope>
    <scope>INTERACTION WITH NAM2</scope>
</reference>
<reference key="6">
    <citation type="journal article" date="1989" name="Curr. Genet.">
        <title>Synthesis and function of the mitochondrial intron -- encoded bI4 RNA maturase from Saccharomyces cerevisiae. Effects of upstream frameshift mutations.</title>
        <authorList>
            <person name="Goguel V."/>
            <person name="Perea J."/>
            <person name="Jacq C."/>
        </authorList>
    </citation>
    <scope>FUNCTION</scope>
    <scope>EXPRESSION AS COB FUSION PROTEIN</scope>
</reference>
<reference key="7">
    <citation type="journal article" date="1993" name="Annu. Rev. Biochem.">
        <title>Introns as mobile genetic elements.</title>
        <authorList>
            <person name="Lambowitz A.M."/>
            <person name="Belfort M."/>
        </authorList>
    </citation>
    <scope>FUNCTION</scope>
    <scope>PROTEOLYTIC CLEAVAGE</scope>
</reference>
<reference key="8">
    <citation type="journal article" date="2000" name="RNA">
        <title>The bI4 group I intron binds directly to both its protein splicing partners, a tRNA synthetase and maturase, to facilitate RNA splicing activity.</title>
        <authorList>
            <person name="Rho S.B."/>
            <person name="Martinis S.A."/>
        </authorList>
    </citation>
    <scope>FUNCTION</scope>
    <scope>INTERACTION WITH NAM2</scope>
</reference>
<name>MBI4_YEAST</name>
<keyword id="KW-0378">Hydrolase</keyword>
<keyword id="KW-0496">Mitochondrion</keyword>
<keyword id="KW-0507">mRNA processing</keyword>
<keyword id="KW-0508">mRNA splicing</keyword>
<keyword id="KW-1185">Reference proteome</keyword>
<gene>
    <name type="primary">BI4</name>
    <name type="synonym">SCBI4</name>
    <name type="ordered locus">Q0120</name>
</gene>
<geneLocation type="mitochondrion"/>
<evidence type="ECO:0000269" key="1">
    <source>
    </source>
</evidence>
<evidence type="ECO:0000269" key="2">
    <source>
    </source>
</evidence>
<evidence type="ECO:0000269" key="3">
    <source>
    </source>
</evidence>
<evidence type="ECO:0000269" key="4">
    <source>
    </source>
</evidence>
<evidence type="ECO:0000305" key="5"/>
<proteinExistence type="evidence at protein level"/>
<sequence>MAFRKSNVYLSLVNSYIIDSPQPSSINYWWNMGSLLGLCLVIQIVTGIFMAMHYSSNIELAFSSVEHIMRDVHNGYILRYLHANGASFFFMVMFMHMAKGLYYGSYRSPRVTLWNVGVIIFILTIATAFLGYCCVYGQMSHWGATVITNLFSAIPFVGNDIVSWLWGGFSVSNPTIQRFFALHYLVPFIIAAMVIMHLMALHIHGSSNPLGITGNLDRIPMHSYFIFKDLVTVFLFMLILALFVFYSPNTLGQNMALLLITYVINILCAVCWKSLFIKYQWKIYNKTTYYFIIQNILNTKQLNNFVLKFNWTKQYNKMNIVSDLFNPNRVKYYYKEDNQQVTNMNSSNTHLTSNKKNLLVDTSETTRTTKNKFNYLLNIFNMKKMNQIITKRHYSIYKDSNIRFNQWLAGLIDGDGYFCITKNKYASCEITVELKDEKMLRQIQDKFGGSVKLRSGVKAIRYRLQNKEGMIKLINAVNGNIRNSKRLVQFNKVCILLNIDFKEPIKLTKDNAWFMGFFDADGTINYYYSGKLKIRPQLTISVTNKYLHDVEYYREVFGGNIYFDKAKNGYFKWSINNKELHNIFYTYNKSCPSKSNKGKRLFLIDKFYYLYDLLAFKAPHNTALYKAWLKFNEKWNNN</sequence>
<dbReference type="EC" id="3.1.-.-"/>
<dbReference type="EMBL" id="V00696">
    <property type="protein sequence ID" value="CAB43023.1"/>
    <property type="status" value="ALT_SEQ"/>
    <property type="molecule type" value="Genomic_DNA"/>
</dbReference>
<dbReference type="EMBL" id="V00696">
    <property type="protein sequence ID" value="CAA24073.2"/>
    <property type="status" value="ALT_SEQ"/>
    <property type="molecule type" value="Genomic_DNA"/>
</dbReference>
<dbReference type="EMBL" id="KP263414">
    <property type="protein sequence ID" value="AIZ98891.1"/>
    <property type="molecule type" value="Genomic_DNA"/>
</dbReference>
<dbReference type="EMBL" id="S76640">
    <property type="protein sequence ID" value="AAB21125.2"/>
    <property type="molecule type" value="Genomic_DNA"/>
</dbReference>
<dbReference type="PIR" id="S78666">
    <property type="entry name" value="QQBY2M"/>
</dbReference>
<dbReference type="RefSeq" id="NP_009316.1">
    <property type="nucleotide sequence ID" value="NC_001224.1"/>
</dbReference>
<dbReference type="SMR" id="P03879"/>
<dbReference type="BioGRID" id="34778">
    <property type="interactions" value="8"/>
</dbReference>
<dbReference type="ComplexPortal" id="CPX-1314">
    <property type="entry name" value="bI4 intron splicing factor complex"/>
</dbReference>
<dbReference type="FunCoup" id="P03879">
    <property type="interactions" value="105"/>
</dbReference>
<dbReference type="IntAct" id="P03879">
    <property type="interactions" value="1"/>
</dbReference>
<dbReference type="STRING" id="4932.Q0120"/>
<dbReference type="PaxDb" id="4932-Q0120"/>
<dbReference type="PeptideAtlas" id="P03879"/>
<dbReference type="EnsemblFungi" id="Q0120_mRNA">
    <property type="protein sequence ID" value="Q0120"/>
    <property type="gene ID" value="Q0120"/>
</dbReference>
<dbReference type="GeneID" id="854582"/>
<dbReference type="KEGG" id="sce:Q0120"/>
<dbReference type="AGR" id="SGD:S000007273"/>
<dbReference type="SGD" id="S000007273">
    <property type="gene designation" value="BI4"/>
</dbReference>
<dbReference type="VEuPathDB" id="FungiDB:Q0120"/>
<dbReference type="eggNOG" id="KOG4663">
    <property type="taxonomic scope" value="Eukaryota"/>
</dbReference>
<dbReference type="GeneTree" id="ENSGT00390000017948"/>
<dbReference type="HOGENOM" id="CLU_429071_0_0_1"/>
<dbReference type="InParanoid" id="P03879"/>
<dbReference type="OrthoDB" id="244at2759"/>
<dbReference type="BioCyc" id="YEAST:G3O-34382-MONOMER"/>
<dbReference type="Reactome" id="R-SCE-611105">
    <property type="pathway name" value="Respiratory electron transport"/>
</dbReference>
<dbReference type="PRO" id="PR:P03879"/>
<dbReference type="Proteomes" id="UP000002311">
    <property type="component" value="Mitochondrion"/>
</dbReference>
<dbReference type="RNAct" id="P03879">
    <property type="molecule type" value="protein"/>
</dbReference>
<dbReference type="GO" id="GO:0005739">
    <property type="term" value="C:mitochondrion"/>
    <property type="evidence" value="ECO:0000314"/>
    <property type="project" value="SGD"/>
</dbReference>
<dbReference type="GO" id="GO:0004519">
    <property type="term" value="F:endonuclease activity"/>
    <property type="evidence" value="ECO:0007669"/>
    <property type="project" value="InterPro"/>
</dbReference>
<dbReference type="GO" id="GO:0003723">
    <property type="term" value="F:RNA binding"/>
    <property type="evidence" value="ECO:0000314"/>
    <property type="project" value="SGD"/>
</dbReference>
<dbReference type="GO" id="GO:0000372">
    <property type="term" value="P:Group I intron splicing"/>
    <property type="evidence" value="ECO:0000314"/>
    <property type="project" value="SGD"/>
</dbReference>
<dbReference type="GO" id="GO:0006122">
    <property type="term" value="P:mitochondrial electron transport, ubiquinol to cytochrome c"/>
    <property type="evidence" value="ECO:0000318"/>
    <property type="project" value="GO_Central"/>
</dbReference>
<dbReference type="GO" id="GO:0090615">
    <property type="term" value="P:mitochondrial mRNA processing"/>
    <property type="evidence" value="ECO:0000315"/>
    <property type="project" value="SGD"/>
</dbReference>
<dbReference type="GO" id="GO:0006397">
    <property type="term" value="P:mRNA processing"/>
    <property type="evidence" value="ECO:0000314"/>
    <property type="project" value="ComplexPortal"/>
</dbReference>
<dbReference type="CDD" id="cd00284">
    <property type="entry name" value="Cytochrome_b_N"/>
    <property type="match status" value="1"/>
</dbReference>
<dbReference type="FunFam" id="1.20.810.10:FF:000018">
    <property type="entry name" value="Cytochrome b mRNA maturase bI3"/>
    <property type="match status" value="1"/>
</dbReference>
<dbReference type="FunFam" id="3.10.28.10:FF:000021">
    <property type="entry name" value="Intron-encoded DNA endonuclease ai2a"/>
    <property type="match status" value="1"/>
</dbReference>
<dbReference type="Gene3D" id="1.20.810.10">
    <property type="entry name" value="Cytochrome Bc1 Complex, Chain C"/>
    <property type="match status" value="1"/>
</dbReference>
<dbReference type="Gene3D" id="3.10.28.10">
    <property type="entry name" value="Homing endonucleases"/>
    <property type="match status" value="2"/>
</dbReference>
<dbReference type="InterPro" id="IPR005797">
    <property type="entry name" value="Cyt_b/b6_N"/>
</dbReference>
<dbReference type="InterPro" id="IPR027387">
    <property type="entry name" value="Cytb/b6-like_sf"/>
</dbReference>
<dbReference type="InterPro" id="IPR048259">
    <property type="entry name" value="Cytochrome_b_N_euk/bac"/>
</dbReference>
<dbReference type="InterPro" id="IPR016174">
    <property type="entry name" value="Di-haem_cyt_TM"/>
</dbReference>
<dbReference type="InterPro" id="IPR027434">
    <property type="entry name" value="Homing_endonucl"/>
</dbReference>
<dbReference type="InterPro" id="IPR004860">
    <property type="entry name" value="LAGLIDADG_dom"/>
</dbReference>
<dbReference type="PANTHER" id="PTHR19271">
    <property type="entry name" value="CYTOCHROME B"/>
    <property type="match status" value="1"/>
</dbReference>
<dbReference type="PANTHER" id="PTHR19271:SF16">
    <property type="entry name" value="CYTOCHROME B"/>
    <property type="match status" value="1"/>
</dbReference>
<dbReference type="Pfam" id="PF00033">
    <property type="entry name" value="Cytochrome_B"/>
    <property type="match status" value="1"/>
</dbReference>
<dbReference type="Pfam" id="PF00961">
    <property type="entry name" value="LAGLIDADG_1"/>
    <property type="match status" value="2"/>
</dbReference>
<dbReference type="SUPFAM" id="SSF55608">
    <property type="entry name" value="Homing endonucleases"/>
    <property type="match status" value="2"/>
</dbReference>
<dbReference type="SUPFAM" id="SSF81342">
    <property type="entry name" value="Transmembrane di-heme cytochromes"/>
    <property type="match status" value="1"/>
</dbReference>
<dbReference type="PROSITE" id="PS51002">
    <property type="entry name" value="CYTB_NTER"/>
    <property type="match status" value="1"/>
</dbReference>